<organismHost>
    <name type="scientific">Cynomys gunnisoni</name>
    <name type="common">Gunnison's prairie dog</name>
    <name type="synonym">Spermophilus gunnisoni</name>
    <dbReference type="NCBI Taxonomy" id="45479"/>
</organismHost>
<organismHost>
    <name type="scientific">Cynomys leucurus</name>
    <name type="common">White-tailed prairie dog</name>
    <dbReference type="NCBI Taxonomy" id="99825"/>
</organismHost>
<organismHost>
    <name type="scientific">Cynomys ludovicianus</name>
    <name type="common">Black-tailed prairie dog</name>
    <dbReference type="NCBI Taxonomy" id="45480"/>
</organismHost>
<organismHost>
    <name type="scientific">Cynomys mexicanus</name>
    <name type="common">Mexican prairie dog</name>
    <dbReference type="NCBI Taxonomy" id="99826"/>
</organismHost>
<organismHost>
    <name type="scientific">Cynomys parvidens</name>
    <name type="common">Utah prairie dog</name>
    <dbReference type="NCBI Taxonomy" id="99827"/>
</organismHost>
<organismHost>
    <name type="scientific">Gliridae</name>
    <name type="common">dormice</name>
    <dbReference type="NCBI Taxonomy" id="30650"/>
</organismHost>
<organismHost>
    <name type="scientific">Heliosciurus ruwenzorii</name>
    <name type="common">Ruwenzori sun squirrel</name>
    <dbReference type="NCBI Taxonomy" id="226685"/>
</organismHost>
<organismHost>
    <name type="scientific">Homo sapiens</name>
    <name type="common">Human</name>
    <dbReference type="NCBI Taxonomy" id="9606"/>
</organismHost>
<organismHost>
    <name type="scientific">Mus musculus</name>
    <name type="common">Mouse</name>
    <dbReference type="NCBI Taxonomy" id="10090"/>
</organismHost>
<proteinExistence type="inferred from homology"/>
<comment type="function">
    <text evidence="1">Soluble IL18-binding protein that may modulate the host antiviral response.</text>
</comment>
<comment type="subcellular location">
    <subcellularLocation>
        <location evidence="1">Secreted</location>
    </subcellularLocation>
</comment>
<comment type="similarity">
    <text evidence="3">Belongs to the orthopoxvirus OPG022 family.</text>
</comment>
<keyword id="KW-0244">Early protein</keyword>
<keyword id="KW-0945">Host-virus interaction</keyword>
<keyword id="KW-1185">Reference proteome</keyword>
<keyword id="KW-0964">Secreted</keyword>
<keyword id="KW-0732">Signal</keyword>
<keyword id="KW-0899">Viral immunoevasion</keyword>
<reference key="1">
    <citation type="journal article" date="2022" name="J. Infect. Dis.">
        <title>Exportation of Monkeypox virus from the African continent.</title>
        <authorList>
            <person name="Mauldin M.R."/>
            <person name="McCollum A.M."/>
            <person name="Nakazawa Y.J."/>
            <person name="Mandra A."/>
            <person name="Whitehouse E.R."/>
            <person name="Davidson W."/>
            <person name="Zhao H."/>
            <person name="Gao J."/>
            <person name="Li Y."/>
            <person name="Doty J."/>
            <person name="Yinka-Ogunleye A."/>
            <person name="Akinpelu A."/>
            <person name="Aruna O."/>
            <person name="Naidoo D."/>
            <person name="Lewandowski K."/>
            <person name="Afrough B."/>
            <person name="Graham V."/>
            <person name="Aarons E."/>
            <person name="Hewson R."/>
            <person name="Vipond R."/>
            <person name="Dunning J."/>
            <person name="Chand M."/>
            <person name="Brown C."/>
            <person name="Cohen-Gihon I."/>
            <person name="Erez N."/>
            <person name="Shifman O."/>
            <person name="Israeli O."/>
            <person name="Sharon M."/>
            <person name="Schwartz E."/>
            <person name="Beth-Din A."/>
            <person name="Zvi A."/>
            <person name="Mak T.M."/>
            <person name="Ng Y.K."/>
            <person name="Cui L."/>
            <person name="Lin R.T.P."/>
            <person name="Olson V.A."/>
            <person name="Brooks T."/>
            <person name="Paran N."/>
            <person name="Ihekweazu C."/>
            <person name="Reynolds M.G."/>
        </authorList>
    </citation>
    <scope>NUCLEOTIDE SEQUENCE [LARGE SCALE GENOMIC DNA]</scope>
    <source>
        <strain>MPXV-M5312_HM12_Rivers</strain>
    </source>
</reference>
<protein>
    <recommendedName>
        <fullName>Interleukin-18-binding protein</fullName>
        <shortName>vIL-18BP</shortName>
    </recommendedName>
</protein>
<feature type="signal peptide" evidence="2">
    <location>
        <begin position="1"/>
        <end position="16"/>
    </location>
</feature>
<feature type="chain" id="PRO_0000457189" description="Interleukin-18-binding protein" evidence="2">
    <location>
        <begin position="17"/>
        <end position="126"/>
    </location>
</feature>
<gene>
    <name type="primary">OPG022</name>
    <name type="synonym">D6L</name>
    <name type="ORF">MPXVgp009</name>
</gene>
<name>IL18B_MONPV</name>
<organism evidence="4 5">
    <name type="scientific">Monkeypox virus</name>
    <dbReference type="NCBI Taxonomy" id="10244"/>
    <lineage>
        <taxon>Viruses</taxon>
        <taxon>Varidnaviria</taxon>
        <taxon>Bamfordvirae</taxon>
        <taxon>Nucleocytoviricota</taxon>
        <taxon>Pokkesviricetes</taxon>
        <taxon>Chitovirales</taxon>
        <taxon>Poxviridae</taxon>
        <taxon>Chordopoxvirinae</taxon>
        <taxon>Orthopoxvirus</taxon>
    </lineage>
</organism>
<sequence>MRILFLIAFMYGCVHSYVNAVETKCPNLAIVTSSGEFHCSGCVERMPGFSYMYWLANDMKSDEDTKFIEHLGGGIKEDETVRTTDGGITTLRKVLHVTDTNKFAHYRFTCVLITLDGVSKKNIWLK</sequence>
<dbReference type="EMBL" id="MT903340">
    <property type="protein sequence ID" value="QNP12881.1"/>
    <property type="molecule type" value="Genomic_DNA"/>
</dbReference>
<dbReference type="RefSeq" id="YP_010377008.1">
    <property type="nucleotide sequence ID" value="NC_063383.1"/>
</dbReference>
<dbReference type="SMR" id="A0A7H0DMZ8"/>
<dbReference type="GeneID" id="72551423"/>
<dbReference type="Proteomes" id="UP000516359">
    <property type="component" value="Genome"/>
</dbReference>
<dbReference type="GO" id="GO:0005576">
    <property type="term" value="C:extracellular region"/>
    <property type="evidence" value="ECO:0007669"/>
    <property type="project" value="UniProtKB-SubCell"/>
</dbReference>
<dbReference type="Gene3D" id="2.60.40.10">
    <property type="entry name" value="Immunoglobulins"/>
    <property type="match status" value="1"/>
</dbReference>
<dbReference type="InterPro" id="IPR013783">
    <property type="entry name" value="Ig-like_fold"/>
</dbReference>
<dbReference type="InterPro" id="IPR008791">
    <property type="entry name" value="Orthopox_IL18-bd"/>
</dbReference>
<dbReference type="Pfam" id="PF05566">
    <property type="entry name" value="Pox_vIL-18BP"/>
    <property type="match status" value="1"/>
</dbReference>
<evidence type="ECO:0000250" key="1">
    <source>
        <dbReference type="UniProtKB" id="P17357"/>
    </source>
</evidence>
<evidence type="ECO:0000255" key="2"/>
<evidence type="ECO:0000305" key="3"/>
<evidence type="ECO:0000312" key="4">
    <source>
        <dbReference type="EMBL" id="QNP12881.1"/>
    </source>
</evidence>
<evidence type="ECO:0000312" key="5">
    <source>
        <dbReference type="Proteomes" id="UP000516359"/>
    </source>
</evidence>
<accession>A0A7H0DMZ8</accession>